<proteinExistence type="evidence at protein level"/>
<accession>Q74C76</accession>
<comment type="function">
    <text evidence="2">Catalyzes the condensation of pyruvate and acetyl-coenzyme A to form (R)-citramalate. Makes part of the main pathway for isoleucine biosynthesis in G.sulfurreducens, i.e. the citramalate-dependent pathway.</text>
</comment>
<comment type="catalytic activity">
    <reaction evidence="2">
        <text>pyruvate + acetyl-CoA + H2O = (3R)-citramalate + CoA + H(+)</text>
        <dbReference type="Rhea" id="RHEA:19045"/>
        <dbReference type="ChEBI" id="CHEBI:15361"/>
        <dbReference type="ChEBI" id="CHEBI:15377"/>
        <dbReference type="ChEBI" id="CHEBI:15378"/>
        <dbReference type="ChEBI" id="CHEBI:30934"/>
        <dbReference type="ChEBI" id="CHEBI:57287"/>
        <dbReference type="ChEBI" id="CHEBI:57288"/>
        <dbReference type="EC" id="2.3.3.21"/>
    </reaction>
</comment>
<comment type="pathway">
    <text evidence="2">Amino-acid biosynthesis; L-isoleucine biosynthesis; 2-oxobutanoate from pyruvate: step 1/3.</text>
</comment>
<comment type="disruption phenotype">
    <text evidence="2">Cells lacking this gene show a great reduction in citramalate synthase activity and are capable of growth in the absence of isoleucine, whereas mutants lacking both cimA and the threonine ammonia-lyase tcdB are auxotrophs for isoleucine.</text>
</comment>
<comment type="similarity">
    <text evidence="4">Belongs to the alpha-IPM synthase/homocitrate synthase family.</text>
</comment>
<reference key="1">
    <citation type="journal article" date="2003" name="Science">
        <title>Genome of Geobacter sulfurreducens: metal reduction in subsurface environments.</title>
        <authorList>
            <person name="Methe B.A."/>
            <person name="Nelson K.E."/>
            <person name="Eisen J.A."/>
            <person name="Paulsen I.T."/>
            <person name="Nelson W.C."/>
            <person name="Heidelberg J.F."/>
            <person name="Wu D."/>
            <person name="Wu M."/>
            <person name="Ward N.L."/>
            <person name="Beanan M.J."/>
            <person name="Dodson R.J."/>
            <person name="Madupu R."/>
            <person name="Brinkac L.M."/>
            <person name="Daugherty S.C."/>
            <person name="DeBoy R.T."/>
            <person name="Durkin A.S."/>
            <person name="Gwinn M.L."/>
            <person name="Kolonay J.F."/>
            <person name="Sullivan S.A."/>
            <person name="Haft D.H."/>
            <person name="Selengut J."/>
            <person name="Davidsen T.M."/>
            <person name="Zafar N."/>
            <person name="White O."/>
            <person name="Tran B."/>
            <person name="Romero C."/>
            <person name="Forberger H.A."/>
            <person name="Weidman J.F."/>
            <person name="Khouri H.M."/>
            <person name="Feldblyum T.V."/>
            <person name="Utterback T.R."/>
            <person name="Van Aken S.E."/>
            <person name="Lovley D.R."/>
            <person name="Fraser C.M."/>
        </authorList>
    </citation>
    <scope>NUCLEOTIDE SEQUENCE [LARGE SCALE GENOMIC DNA]</scope>
    <source>
        <strain>ATCC 51573 / DSM 12127 / PCA</strain>
    </source>
</reference>
<reference key="2">
    <citation type="journal article" date="2008" name="J. Bacteriol.">
        <title>Elucidation of an alternate isoleucine biosynthesis pathway in Geobacter sulfurreducens.</title>
        <authorList>
            <person name="Risso C."/>
            <person name="Van Dien S.J."/>
            <person name="Orloff A."/>
            <person name="Lovley D.R."/>
            <person name="Coppi M.V."/>
        </authorList>
    </citation>
    <scope>FUNCTION</scope>
    <scope>CATALYTIC ACTIVITY</scope>
    <scope>DISRUPTION PHENOTYPE</scope>
    <scope>PATHWAY</scope>
    <source>
        <strain>ATCC 51573 / DSM 12127 / PCA</strain>
    </source>
</reference>
<evidence type="ECO:0000255" key="1">
    <source>
        <dbReference type="PROSITE-ProRule" id="PRU01151"/>
    </source>
</evidence>
<evidence type="ECO:0000269" key="2">
    <source>
    </source>
</evidence>
<evidence type="ECO:0000303" key="3">
    <source>
    </source>
</evidence>
<evidence type="ECO:0000305" key="4"/>
<evidence type="ECO:0000312" key="5">
    <source>
        <dbReference type="EMBL" id="AAR35175.1"/>
    </source>
</evidence>
<name>CIMA_GEOSL</name>
<organism>
    <name type="scientific">Geobacter sulfurreducens (strain ATCC 51573 / DSM 12127 / PCA)</name>
    <dbReference type="NCBI Taxonomy" id="243231"/>
    <lineage>
        <taxon>Bacteria</taxon>
        <taxon>Pseudomonadati</taxon>
        <taxon>Thermodesulfobacteriota</taxon>
        <taxon>Desulfuromonadia</taxon>
        <taxon>Geobacterales</taxon>
        <taxon>Geobacteraceae</taxon>
        <taxon>Geobacter</taxon>
    </lineage>
</organism>
<gene>
    <name evidence="3 5" type="primary">cimA</name>
    <name evidence="5" type="ordered locus">GSU1798</name>
</gene>
<protein>
    <recommendedName>
        <fullName evidence="4">(R)-citramalate synthase</fullName>
        <ecNumber evidence="2">2.3.3.21</ecNumber>
    </recommendedName>
    <alternativeName>
        <fullName evidence="3">Citramalate synthase</fullName>
    </alternativeName>
</protein>
<feature type="chain" id="PRO_0000430579" description="(R)-citramalate synthase">
    <location>
        <begin position="1"/>
        <end position="528"/>
    </location>
</feature>
<feature type="domain" description="Pyruvate carboxyltransferase" evidence="1">
    <location>
        <begin position="4"/>
        <end position="266"/>
    </location>
</feature>
<sequence length="528" mass="59071">MSLVKLYDTTLRDGTQAEDISFLVEDKIRIAHKLDEIGIHYIEGGWPGSNPKDVAFFKDIKKEKLSQAKIAAFGSTRRAKVTPDKDHNLKTLIQAEPDVCTIFGKTWDFHVHEALRISLEENLELIFDSLEYLKANVPEVFYDAEHFFDGYKANPDYAIKTLKAAQDAKADCIVLCDTNGGTMPFELVEIIREVRKHITAPLGIHTHNDSECAVANSLHAVSEGIVQVQGTINGFGERCGNANLCSIIPALKLKMKRECIGDDQLRKLRDLSRFVYELANLSPNKHQAYVGNSAFAHKGGVHVSAIQRHPETYEHLRPELVGNMTRVLVSDLSGRSNILAKAEEFNIKMDSKDPVTLEILENIKEMENRGYQFEGAEASFELLMKRALGTHRKFFSVIGFRVIDEKRHEDQKPLSEATIMVKVGGKIEHTAAEGNGPVNALDNALRKALEKFYPRLKEVKLLDYKVRVLPAGQGTASSIRVLIESGDKESRWGTVGVSENIVDASYQALLDSVEYKLHKSEEIEGSKK</sequence>
<keyword id="KW-0028">Amino-acid biosynthesis</keyword>
<keyword id="KW-0100">Branched-chain amino acid biosynthesis</keyword>
<keyword id="KW-0412">Isoleucine biosynthesis</keyword>
<keyword id="KW-1185">Reference proteome</keyword>
<keyword id="KW-0808">Transferase</keyword>
<dbReference type="EC" id="2.3.3.21" evidence="2"/>
<dbReference type="EMBL" id="AE017180">
    <property type="protein sequence ID" value="AAR35175.1"/>
    <property type="molecule type" value="Genomic_DNA"/>
</dbReference>
<dbReference type="RefSeq" id="NP_952848.1">
    <property type="nucleotide sequence ID" value="NC_002939.5"/>
</dbReference>
<dbReference type="RefSeq" id="WP_010942443.1">
    <property type="nucleotide sequence ID" value="NC_002939.5"/>
</dbReference>
<dbReference type="SMR" id="Q74C76"/>
<dbReference type="STRING" id="243231.GSU1798"/>
<dbReference type="EnsemblBacteria" id="AAR35175">
    <property type="protein sequence ID" value="AAR35175"/>
    <property type="gene ID" value="GSU1798"/>
</dbReference>
<dbReference type="KEGG" id="gsu:GSU1798"/>
<dbReference type="PATRIC" id="fig|243231.5.peg.1836"/>
<dbReference type="eggNOG" id="COG0119">
    <property type="taxonomic scope" value="Bacteria"/>
</dbReference>
<dbReference type="HOGENOM" id="CLU_022158_7_0_7"/>
<dbReference type="InParanoid" id="Q74C76"/>
<dbReference type="OrthoDB" id="9803573at2"/>
<dbReference type="BioCyc" id="MetaCyc:MONOMER-21277"/>
<dbReference type="BRENDA" id="2.3.1.182">
    <property type="organism ID" value="7676"/>
</dbReference>
<dbReference type="UniPathway" id="UPA00047">
    <property type="reaction ID" value="UER00066"/>
</dbReference>
<dbReference type="Proteomes" id="UP000000577">
    <property type="component" value="Chromosome"/>
</dbReference>
<dbReference type="GO" id="GO:0043714">
    <property type="term" value="F:(R)-citramalate synthase activity"/>
    <property type="evidence" value="ECO:0007669"/>
    <property type="project" value="RHEA"/>
</dbReference>
<dbReference type="GO" id="GO:0003852">
    <property type="term" value="F:2-isopropylmalate synthase activity"/>
    <property type="evidence" value="ECO:0007669"/>
    <property type="project" value="InterPro"/>
</dbReference>
<dbReference type="GO" id="GO:0009097">
    <property type="term" value="P:isoleucine biosynthetic process"/>
    <property type="evidence" value="ECO:0007669"/>
    <property type="project" value="UniProtKB-UniPathway"/>
</dbReference>
<dbReference type="GO" id="GO:0009098">
    <property type="term" value="P:L-leucine biosynthetic process"/>
    <property type="evidence" value="ECO:0007669"/>
    <property type="project" value="InterPro"/>
</dbReference>
<dbReference type="CDD" id="cd07941">
    <property type="entry name" value="DRE_TIM_LeuA3"/>
    <property type="match status" value="1"/>
</dbReference>
<dbReference type="Gene3D" id="1.10.238.260">
    <property type="match status" value="1"/>
</dbReference>
<dbReference type="Gene3D" id="3.30.160.270">
    <property type="match status" value="1"/>
</dbReference>
<dbReference type="Gene3D" id="3.20.20.70">
    <property type="entry name" value="Aldolase class I"/>
    <property type="match status" value="1"/>
</dbReference>
<dbReference type="InterPro" id="IPR013709">
    <property type="entry name" value="2-isopropylmalate_synth_dimer"/>
</dbReference>
<dbReference type="InterPro" id="IPR002034">
    <property type="entry name" value="AIPM/Hcit_synth_CS"/>
</dbReference>
<dbReference type="InterPro" id="IPR013785">
    <property type="entry name" value="Aldolase_TIM"/>
</dbReference>
<dbReference type="InterPro" id="IPR005675">
    <property type="entry name" value="Citramal_synthase"/>
</dbReference>
<dbReference type="InterPro" id="IPR054691">
    <property type="entry name" value="LeuA/HCS_post-cat"/>
</dbReference>
<dbReference type="InterPro" id="IPR036230">
    <property type="entry name" value="LeuA_allosteric_dom_sf"/>
</dbReference>
<dbReference type="InterPro" id="IPR000891">
    <property type="entry name" value="PYR_CT"/>
</dbReference>
<dbReference type="NCBIfam" id="TIGR00977">
    <property type="entry name" value="citramal_synth"/>
    <property type="match status" value="1"/>
</dbReference>
<dbReference type="PANTHER" id="PTHR43538:SF1">
    <property type="entry name" value="(R)-CITRAMALATE SYNTHASE"/>
    <property type="match status" value="1"/>
</dbReference>
<dbReference type="PANTHER" id="PTHR43538">
    <property type="entry name" value="ALPHA-IPM SYNTHASE/HOMOCITRATE SYNTHASE"/>
    <property type="match status" value="1"/>
</dbReference>
<dbReference type="Pfam" id="PF22617">
    <property type="entry name" value="HCS_D2"/>
    <property type="match status" value="1"/>
</dbReference>
<dbReference type="Pfam" id="PF00682">
    <property type="entry name" value="HMGL-like"/>
    <property type="match status" value="1"/>
</dbReference>
<dbReference type="Pfam" id="PF08502">
    <property type="entry name" value="LeuA_dimer"/>
    <property type="match status" value="1"/>
</dbReference>
<dbReference type="SMART" id="SM00917">
    <property type="entry name" value="LeuA_dimer"/>
    <property type="match status" value="1"/>
</dbReference>
<dbReference type="SUPFAM" id="SSF110921">
    <property type="entry name" value="2-isopropylmalate synthase LeuA, allosteric (dimerisation) domain"/>
    <property type="match status" value="1"/>
</dbReference>
<dbReference type="SUPFAM" id="SSF51569">
    <property type="entry name" value="Aldolase"/>
    <property type="match status" value="1"/>
</dbReference>
<dbReference type="PROSITE" id="PS00815">
    <property type="entry name" value="AIPM_HOMOCIT_SYNTH_1"/>
    <property type="match status" value="1"/>
</dbReference>
<dbReference type="PROSITE" id="PS50991">
    <property type="entry name" value="PYR_CT"/>
    <property type="match status" value="1"/>
</dbReference>